<protein>
    <recommendedName>
        <fullName>E3 ubiquitin-protein ligase RNF146</fullName>
        <ecNumber>2.3.2.27</ecNumber>
    </recommendedName>
    <alternativeName>
        <fullName>Dactylidin</fullName>
    </alternativeName>
    <alternativeName>
        <fullName>Iduna</fullName>
    </alternativeName>
    <alternativeName>
        <fullName>RING finger protein 146</fullName>
    </alternativeName>
    <alternativeName>
        <fullName evidence="16">RING-type E3 ubiquitin transferase RNF146</fullName>
    </alternativeName>
</protein>
<gene>
    <name type="primary">RNF146</name>
</gene>
<accession>Q9NTX7</accession>
<accession>E1P572</accession>
<accession>Q6FIB2</accession>
<accession>Q7L8H4</accession>
<accession>Q96K03</accession>
<accession>Q96T06</accession>
<accession>Q9NTX6</accession>
<reference key="1">
    <citation type="journal article" date="2005" name="Eur. J. Neurosci.">
        <title>The novel cytosolic RING finger protein dactylidin is up-regulated in brains of patients with Alzheimer's disease.</title>
        <authorList>
            <person name="von Rotz R.C."/>
            <person name="Kins S."/>
            <person name="Hipfel R."/>
            <person name="von der Kammer H."/>
            <person name="Nitsch R.M."/>
        </authorList>
    </citation>
    <scope>NUCLEOTIDE SEQUENCE [MRNA] (ISOFORM 2)</scope>
    <scope>SUBCELLULAR LOCATION</scope>
    <source>
        <tissue>Brain</tissue>
    </source>
</reference>
<reference key="2">
    <citation type="journal article" date="2001" name="Genome Res.">
        <title>Towards a catalog of human genes and proteins: sequencing and analysis of 500 novel complete protein coding human cDNAs.</title>
        <authorList>
            <person name="Wiemann S."/>
            <person name="Weil B."/>
            <person name="Wellenreuther R."/>
            <person name="Gassenhuber J."/>
            <person name="Glassl S."/>
            <person name="Ansorge W."/>
            <person name="Boecher M."/>
            <person name="Bloecker H."/>
            <person name="Bauersachs S."/>
            <person name="Blum H."/>
            <person name="Lauber J."/>
            <person name="Duesterhoeft A."/>
            <person name="Beyer A."/>
            <person name="Koehrer K."/>
            <person name="Strack N."/>
            <person name="Mewes H.-W."/>
            <person name="Ottenwaelder B."/>
            <person name="Obermaier B."/>
            <person name="Tampe J."/>
            <person name="Heubner D."/>
            <person name="Wambutt R."/>
            <person name="Korn B."/>
            <person name="Klein M."/>
            <person name="Poustka A."/>
        </authorList>
    </citation>
    <scope>NUCLEOTIDE SEQUENCE [LARGE SCALE MRNA] (ISOFORM 2)</scope>
    <source>
        <tissue>Testis</tissue>
    </source>
</reference>
<reference key="3">
    <citation type="journal article" date="2004" name="Nat. Genet.">
        <title>Complete sequencing and characterization of 21,243 full-length human cDNAs.</title>
        <authorList>
            <person name="Ota T."/>
            <person name="Suzuki Y."/>
            <person name="Nishikawa T."/>
            <person name="Otsuki T."/>
            <person name="Sugiyama T."/>
            <person name="Irie R."/>
            <person name="Wakamatsu A."/>
            <person name="Hayashi K."/>
            <person name="Sato H."/>
            <person name="Nagai K."/>
            <person name="Kimura K."/>
            <person name="Makita H."/>
            <person name="Sekine M."/>
            <person name="Obayashi M."/>
            <person name="Nishi T."/>
            <person name="Shibahara T."/>
            <person name="Tanaka T."/>
            <person name="Ishii S."/>
            <person name="Yamamoto J."/>
            <person name="Saito K."/>
            <person name="Kawai Y."/>
            <person name="Isono Y."/>
            <person name="Nakamura Y."/>
            <person name="Nagahari K."/>
            <person name="Murakami K."/>
            <person name="Yasuda T."/>
            <person name="Iwayanagi T."/>
            <person name="Wagatsuma M."/>
            <person name="Shiratori A."/>
            <person name="Sudo H."/>
            <person name="Hosoiri T."/>
            <person name="Kaku Y."/>
            <person name="Kodaira H."/>
            <person name="Kondo H."/>
            <person name="Sugawara M."/>
            <person name="Takahashi M."/>
            <person name="Kanda K."/>
            <person name="Yokoi T."/>
            <person name="Furuya T."/>
            <person name="Kikkawa E."/>
            <person name="Omura Y."/>
            <person name="Abe K."/>
            <person name="Kamihara K."/>
            <person name="Katsuta N."/>
            <person name="Sato K."/>
            <person name="Tanikawa M."/>
            <person name="Yamazaki M."/>
            <person name="Ninomiya K."/>
            <person name="Ishibashi T."/>
            <person name="Yamashita H."/>
            <person name="Murakawa K."/>
            <person name="Fujimori K."/>
            <person name="Tanai H."/>
            <person name="Kimata M."/>
            <person name="Watanabe M."/>
            <person name="Hiraoka S."/>
            <person name="Chiba Y."/>
            <person name="Ishida S."/>
            <person name="Ono Y."/>
            <person name="Takiguchi S."/>
            <person name="Watanabe S."/>
            <person name="Yosida M."/>
            <person name="Hotuta T."/>
            <person name="Kusano J."/>
            <person name="Kanehori K."/>
            <person name="Takahashi-Fujii A."/>
            <person name="Hara H."/>
            <person name="Tanase T.-O."/>
            <person name="Nomura Y."/>
            <person name="Togiya S."/>
            <person name="Komai F."/>
            <person name="Hara R."/>
            <person name="Takeuchi K."/>
            <person name="Arita M."/>
            <person name="Imose N."/>
            <person name="Musashino K."/>
            <person name="Yuuki H."/>
            <person name="Oshima A."/>
            <person name="Sasaki N."/>
            <person name="Aotsuka S."/>
            <person name="Yoshikawa Y."/>
            <person name="Matsunawa H."/>
            <person name="Ichihara T."/>
            <person name="Shiohata N."/>
            <person name="Sano S."/>
            <person name="Moriya S."/>
            <person name="Momiyama H."/>
            <person name="Satoh N."/>
            <person name="Takami S."/>
            <person name="Terashima Y."/>
            <person name="Suzuki O."/>
            <person name="Nakagawa S."/>
            <person name="Senoh A."/>
            <person name="Mizoguchi H."/>
            <person name="Goto Y."/>
            <person name="Shimizu F."/>
            <person name="Wakebe H."/>
            <person name="Hishigaki H."/>
            <person name="Watanabe T."/>
            <person name="Sugiyama A."/>
            <person name="Takemoto M."/>
            <person name="Kawakami B."/>
            <person name="Yamazaki M."/>
            <person name="Watanabe K."/>
            <person name="Kumagai A."/>
            <person name="Itakura S."/>
            <person name="Fukuzumi Y."/>
            <person name="Fujimori Y."/>
            <person name="Komiyama M."/>
            <person name="Tashiro H."/>
            <person name="Tanigami A."/>
            <person name="Fujiwara T."/>
            <person name="Ono T."/>
            <person name="Yamada K."/>
            <person name="Fujii Y."/>
            <person name="Ozaki K."/>
            <person name="Hirao M."/>
            <person name="Ohmori Y."/>
            <person name="Kawabata A."/>
            <person name="Hikiji T."/>
            <person name="Kobatake N."/>
            <person name="Inagaki H."/>
            <person name="Ikema Y."/>
            <person name="Okamoto S."/>
            <person name="Okitani R."/>
            <person name="Kawakami T."/>
            <person name="Noguchi S."/>
            <person name="Itoh T."/>
            <person name="Shigeta K."/>
            <person name="Senba T."/>
            <person name="Matsumura K."/>
            <person name="Nakajima Y."/>
            <person name="Mizuno T."/>
            <person name="Morinaga M."/>
            <person name="Sasaki M."/>
            <person name="Togashi T."/>
            <person name="Oyama M."/>
            <person name="Hata H."/>
            <person name="Watanabe M."/>
            <person name="Komatsu T."/>
            <person name="Mizushima-Sugano J."/>
            <person name="Satoh T."/>
            <person name="Shirai Y."/>
            <person name="Takahashi Y."/>
            <person name="Nakagawa K."/>
            <person name="Okumura K."/>
            <person name="Nagase T."/>
            <person name="Nomura N."/>
            <person name="Kikuchi H."/>
            <person name="Masuho Y."/>
            <person name="Yamashita R."/>
            <person name="Nakai K."/>
            <person name="Yada T."/>
            <person name="Nakamura Y."/>
            <person name="Ohara O."/>
            <person name="Isogai T."/>
            <person name="Sugano S."/>
        </authorList>
    </citation>
    <scope>NUCLEOTIDE SEQUENCE [LARGE SCALE MRNA] (ISOFORMS 1 AND 2)</scope>
    <source>
        <tissue>Placenta</tissue>
        <tissue>Teratocarcinoma</tissue>
    </source>
</reference>
<reference key="4">
    <citation type="submission" date="2004-06" db="EMBL/GenBank/DDBJ databases">
        <title>Cloning of human full open reading frames in Gateway(TM) system entry vector (pDONR201).</title>
        <authorList>
            <person name="Ebert L."/>
            <person name="Schick M."/>
            <person name="Neubert P."/>
            <person name="Schatten R."/>
            <person name="Henze S."/>
            <person name="Korn B."/>
        </authorList>
    </citation>
    <scope>NUCLEOTIDE SEQUENCE [LARGE SCALE MRNA] (ISOFORM 2)</scope>
</reference>
<reference key="5">
    <citation type="journal article" date="2003" name="Nature">
        <title>The DNA sequence and analysis of human chromosome 6.</title>
        <authorList>
            <person name="Mungall A.J."/>
            <person name="Palmer S.A."/>
            <person name="Sims S.K."/>
            <person name="Edwards C.A."/>
            <person name="Ashurst J.L."/>
            <person name="Wilming L."/>
            <person name="Jones M.C."/>
            <person name="Horton R."/>
            <person name="Hunt S.E."/>
            <person name="Scott C.E."/>
            <person name="Gilbert J.G.R."/>
            <person name="Clamp M.E."/>
            <person name="Bethel G."/>
            <person name="Milne S."/>
            <person name="Ainscough R."/>
            <person name="Almeida J.P."/>
            <person name="Ambrose K.D."/>
            <person name="Andrews T.D."/>
            <person name="Ashwell R.I.S."/>
            <person name="Babbage A.K."/>
            <person name="Bagguley C.L."/>
            <person name="Bailey J."/>
            <person name="Banerjee R."/>
            <person name="Barker D.J."/>
            <person name="Barlow K.F."/>
            <person name="Bates K."/>
            <person name="Beare D.M."/>
            <person name="Beasley H."/>
            <person name="Beasley O."/>
            <person name="Bird C.P."/>
            <person name="Blakey S.E."/>
            <person name="Bray-Allen S."/>
            <person name="Brook J."/>
            <person name="Brown A.J."/>
            <person name="Brown J.Y."/>
            <person name="Burford D.C."/>
            <person name="Burrill W."/>
            <person name="Burton J."/>
            <person name="Carder C."/>
            <person name="Carter N.P."/>
            <person name="Chapman J.C."/>
            <person name="Clark S.Y."/>
            <person name="Clark G."/>
            <person name="Clee C.M."/>
            <person name="Clegg S."/>
            <person name="Cobley V."/>
            <person name="Collier R.E."/>
            <person name="Collins J.E."/>
            <person name="Colman L.K."/>
            <person name="Corby N.R."/>
            <person name="Coville G.J."/>
            <person name="Culley K.M."/>
            <person name="Dhami P."/>
            <person name="Davies J."/>
            <person name="Dunn M."/>
            <person name="Earthrowl M.E."/>
            <person name="Ellington A.E."/>
            <person name="Evans K.A."/>
            <person name="Faulkner L."/>
            <person name="Francis M.D."/>
            <person name="Frankish A."/>
            <person name="Frankland J."/>
            <person name="French L."/>
            <person name="Garner P."/>
            <person name="Garnett J."/>
            <person name="Ghori M.J."/>
            <person name="Gilby L.M."/>
            <person name="Gillson C.J."/>
            <person name="Glithero R.J."/>
            <person name="Grafham D.V."/>
            <person name="Grant M."/>
            <person name="Gribble S."/>
            <person name="Griffiths C."/>
            <person name="Griffiths M.N.D."/>
            <person name="Hall R."/>
            <person name="Halls K.S."/>
            <person name="Hammond S."/>
            <person name="Harley J.L."/>
            <person name="Hart E.A."/>
            <person name="Heath P.D."/>
            <person name="Heathcott R."/>
            <person name="Holmes S.J."/>
            <person name="Howden P.J."/>
            <person name="Howe K.L."/>
            <person name="Howell G.R."/>
            <person name="Huckle E."/>
            <person name="Humphray S.J."/>
            <person name="Humphries M.D."/>
            <person name="Hunt A.R."/>
            <person name="Johnson C.M."/>
            <person name="Joy A.A."/>
            <person name="Kay M."/>
            <person name="Keenan S.J."/>
            <person name="Kimberley A.M."/>
            <person name="King A."/>
            <person name="Laird G.K."/>
            <person name="Langford C."/>
            <person name="Lawlor S."/>
            <person name="Leongamornlert D.A."/>
            <person name="Leversha M."/>
            <person name="Lloyd C.R."/>
            <person name="Lloyd D.M."/>
            <person name="Loveland J.E."/>
            <person name="Lovell J."/>
            <person name="Martin S."/>
            <person name="Mashreghi-Mohammadi M."/>
            <person name="Maslen G.L."/>
            <person name="Matthews L."/>
            <person name="McCann O.T."/>
            <person name="McLaren S.J."/>
            <person name="McLay K."/>
            <person name="McMurray A."/>
            <person name="Moore M.J.F."/>
            <person name="Mullikin J.C."/>
            <person name="Niblett D."/>
            <person name="Nickerson T."/>
            <person name="Novik K.L."/>
            <person name="Oliver K."/>
            <person name="Overton-Larty E.K."/>
            <person name="Parker A."/>
            <person name="Patel R."/>
            <person name="Pearce A.V."/>
            <person name="Peck A.I."/>
            <person name="Phillimore B.J.C.T."/>
            <person name="Phillips S."/>
            <person name="Plumb R.W."/>
            <person name="Porter K.M."/>
            <person name="Ramsey Y."/>
            <person name="Ranby S.A."/>
            <person name="Rice C.M."/>
            <person name="Ross M.T."/>
            <person name="Searle S.M."/>
            <person name="Sehra H.K."/>
            <person name="Sheridan E."/>
            <person name="Skuce C.D."/>
            <person name="Smith S."/>
            <person name="Smith M."/>
            <person name="Spraggon L."/>
            <person name="Squares S.L."/>
            <person name="Steward C.A."/>
            <person name="Sycamore N."/>
            <person name="Tamlyn-Hall G."/>
            <person name="Tester J."/>
            <person name="Theaker A.J."/>
            <person name="Thomas D.W."/>
            <person name="Thorpe A."/>
            <person name="Tracey A."/>
            <person name="Tromans A."/>
            <person name="Tubby B."/>
            <person name="Wall M."/>
            <person name="Wallis J.M."/>
            <person name="West A.P."/>
            <person name="White S.S."/>
            <person name="Whitehead S.L."/>
            <person name="Whittaker H."/>
            <person name="Wild A."/>
            <person name="Willey D.J."/>
            <person name="Wilmer T.E."/>
            <person name="Wood J.M."/>
            <person name="Wray P.W."/>
            <person name="Wyatt J.C."/>
            <person name="Young L."/>
            <person name="Younger R.M."/>
            <person name="Bentley D.R."/>
            <person name="Coulson A."/>
            <person name="Durbin R.M."/>
            <person name="Hubbard T."/>
            <person name="Sulston J.E."/>
            <person name="Dunham I."/>
            <person name="Rogers J."/>
            <person name="Beck S."/>
        </authorList>
    </citation>
    <scope>NUCLEOTIDE SEQUENCE [LARGE SCALE GENOMIC DNA]</scope>
</reference>
<reference key="6">
    <citation type="submission" date="2005-09" db="EMBL/GenBank/DDBJ databases">
        <authorList>
            <person name="Mural R.J."/>
            <person name="Istrail S."/>
            <person name="Sutton G.G."/>
            <person name="Florea L."/>
            <person name="Halpern A.L."/>
            <person name="Mobarry C.M."/>
            <person name="Lippert R."/>
            <person name="Walenz B."/>
            <person name="Shatkay H."/>
            <person name="Dew I."/>
            <person name="Miller J.R."/>
            <person name="Flanigan M.J."/>
            <person name="Edwards N.J."/>
            <person name="Bolanos R."/>
            <person name="Fasulo D."/>
            <person name="Halldorsson B.V."/>
            <person name="Hannenhalli S."/>
            <person name="Turner R."/>
            <person name="Yooseph S."/>
            <person name="Lu F."/>
            <person name="Nusskern D.R."/>
            <person name="Shue B.C."/>
            <person name="Zheng X.H."/>
            <person name="Zhong F."/>
            <person name="Delcher A.L."/>
            <person name="Huson D.H."/>
            <person name="Kravitz S.A."/>
            <person name="Mouchard L."/>
            <person name="Reinert K."/>
            <person name="Remington K.A."/>
            <person name="Clark A.G."/>
            <person name="Waterman M.S."/>
            <person name="Eichler E.E."/>
            <person name="Adams M.D."/>
            <person name="Hunkapiller M.W."/>
            <person name="Myers E.W."/>
            <person name="Venter J.C."/>
        </authorList>
    </citation>
    <scope>NUCLEOTIDE SEQUENCE [LARGE SCALE GENOMIC DNA]</scope>
</reference>
<reference key="7">
    <citation type="journal article" date="2004" name="Genome Res.">
        <title>The status, quality, and expansion of the NIH full-length cDNA project: the Mammalian Gene Collection (MGC).</title>
        <authorList>
            <consortium name="The MGC Project Team"/>
        </authorList>
    </citation>
    <scope>NUCLEOTIDE SEQUENCE [LARGE SCALE MRNA] (ISOFORM 2)</scope>
    <source>
        <tissue>Eye</tissue>
    </source>
</reference>
<reference key="8">
    <citation type="journal article" date="2008" name="Proc. Natl. Acad. Sci. U.S.A.">
        <title>Genome-wide association study provides evidence for a breast cancer risk locus at 6q22.33.</title>
        <authorList>
            <person name="Gold B."/>
            <person name="Kirchhoff T."/>
            <person name="Stefanov S."/>
            <person name="Lautenberger J."/>
            <person name="Viale A."/>
            <person name="Garber J."/>
            <person name="Friedman E."/>
            <person name="Narod S."/>
            <person name="Olshen A.B."/>
            <person name="Gregersen P."/>
            <person name="Kosarin K."/>
            <person name="Olsh A."/>
            <person name="Bergeron J."/>
            <person name="Ellis N.A."/>
            <person name="Klein R.J."/>
            <person name="Clark A.G."/>
            <person name="Norton L."/>
            <person name="Dean M."/>
            <person name="Boyd J."/>
            <person name="Offit K."/>
        </authorList>
    </citation>
    <scope>POSSIBLE INVOLVEMENT IN BREAST CANCER</scope>
</reference>
<reference key="9">
    <citation type="journal article" date="2009" name="Cancer Epidemiol. Biomarkers Prev.">
        <title>The 6q22.33 locus and breast cancer susceptibility.</title>
        <authorList>
            <person name="Kirchhoff T."/>
            <person name="Chen Z.Q."/>
            <person name="Gold B."/>
            <person name="Pal P."/>
            <person name="Gaudet M.M."/>
            <person name="Kosarin K."/>
            <person name="Levine D.A."/>
            <person name="Gregersen P."/>
            <person name="Spencer S."/>
            <person name="Harlan M."/>
            <person name="Robson M."/>
            <person name="Klein R.J."/>
            <person name="Hudis C.A."/>
            <person name="Norton L."/>
            <person name="Dean M."/>
            <person name="Offit K."/>
        </authorList>
    </citation>
    <scope>POSSIBLE INVOLVEMENT IN BREAST CANCER</scope>
</reference>
<reference key="10">
    <citation type="journal article" date="2009" name="Fam. Cancer">
        <title>The RNF146 and ECHDC1 genes as candidates for inherited breast and ovarian cancer in Jewish Ashkenazi women.</title>
        <authorList>
            <person name="Menachem T.D."/>
            <person name="Laitman Y."/>
            <person name="Kaufman B."/>
            <person name="Friedman E."/>
        </authorList>
    </citation>
    <scope>POSSIBLE INVOLVEMENT IN BREAST CANCER</scope>
</reference>
<reference key="11">
    <citation type="journal article" date="2011" name="Breast Cancer Res. Treat.">
        <title>Genetic polymorphisms and breast cancer risk: evidence from meta-analyses, pooled analyses, and genome-wide association studies.</title>
        <authorList>
            <person name="Peng S."/>
            <person name="Lu B."/>
            <person name="Ruan W."/>
            <person name="Zhu Y."/>
            <person name="Sheng H."/>
            <person name="Lai M."/>
        </authorList>
    </citation>
    <scope>POSSIBLE INVOLVEMENT IN BREAST CANCER</scope>
</reference>
<reference key="12">
    <citation type="journal article" date="2011" name="Nat. Cell Biol.">
        <title>RNF146 is a poly(ADP-ribose)-directed E3 ligase that regulates axin degradation and Wnt signalling.</title>
        <authorList>
            <person name="Zhang Y."/>
            <person name="Liu S."/>
            <person name="Mickanin C."/>
            <person name="Feng Y."/>
            <person name="Charlat O."/>
            <person name="Michaud G.A."/>
            <person name="Schirle M."/>
            <person name="Shi X."/>
            <person name="Hild M."/>
            <person name="Bauer A."/>
            <person name="Myer V.E."/>
            <person name="Finan P.M."/>
            <person name="Porter J.A."/>
            <person name="Huang S.M."/>
            <person name="Cong F."/>
        </authorList>
    </citation>
    <scope>FUNCTION</scope>
    <scope>PATHWAY</scope>
    <scope>DOMAIN WWE</scope>
    <scope>UBIQUITINATION</scope>
    <scope>INTERACTION WITH AXIN1; AXIN2; CASC3 AND BLZF1</scope>
    <scope>MUTAGENESIS OF ARG-163</scope>
</reference>
<reference key="13">
    <citation type="journal article" date="2011" name="Nat. Med.">
        <title>Iduna protects the brain from glutamate excitotoxicity and stroke by interfering with poly(ADP-ribose) polymer-induced cell death.</title>
        <authorList>
            <person name="Andrabi S.A."/>
            <person name="Kang H.C."/>
            <person name="Haince J.F."/>
            <person name="Lee Y.I."/>
            <person name="Zhang J."/>
            <person name="Chi Z."/>
            <person name="West A.B."/>
            <person name="Koehler R.C."/>
            <person name="Poirier G.G."/>
            <person name="Dawson T.M."/>
            <person name="Dawson V.L."/>
        </authorList>
    </citation>
    <scope>FUNCTION IN NEUROPROTECTION</scope>
</reference>
<reference key="14">
    <citation type="journal article" date="2011" name="PLoS ONE">
        <title>Ubiquitin ligase RNF146 regulates tankyrase and Axin to promote Wnt signaling.</title>
        <authorList>
            <person name="Callow M.G."/>
            <person name="Tran H."/>
            <person name="Phu L."/>
            <person name="Lau T."/>
            <person name="Lee J."/>
            <person name="Sandoval W.N."/>
            <person name="Liu P.S."/>
            <person name="Bheddah S."/>
            <person name="Tao J."/>
            <person name="Lill J.R."/>
            <person name="Hongo J.A."/>
            <person name="Davis D."/>
            <person name="Kirkpatrick D.S."/>
            <person name="Polakis P."/>
            <person name="Costa M."/>
        </authorList>
    </citation>
    <scope>FUNCTION IN WNT SIGNALING</scope>
    <scope>INTERACTION WITH AXIN1; DDB1; DHX15; IQGAP1; LRPPRC; PARP1; PARP2; PRKDC; RUVBL2; TNKS1 AND TNKS2</scope>
    <scope>UBIQUITINATION</scope>
    <scope>SUBCELLULAR LOCATION</scope>
    <scope>MUTAGENESIS OF HIS-54 AND TRP-106</scope>
</reference>
<reference key="15">
    <citation type="journal article" date="2011" name="Proc. Natl. Acad. Sci. U.S.A.">
        <title>Iduna is a poly(ADP-ribose) (PAR)-dependent E3 ubiquitin ligase that regulates DNA damage.</title>
        <authorList>
            <person name="Kang H.C."/>
            <person name="Lee Y.I."/>
            <person name="Shin J.H."/>
            <person name="Andrabi S.A."/>
            <person name="Chi Z."/>
            <person name="Gagne J.P."/>
            <person name="Lee Y."/>
            <person name="Ko H.S."/>
            <person name="Lee B.D."/>
            <person name="Poirier G.G."/>
            <person name="Dawson V.L."/>
            <person name="Dawson T.M."/>
        </authorList>
    </citation>
    <scope>FUNCTION IN DNA DAMAGE RESPONSE</scope>
    <scope>HOMOOLIGOMERIZATION</scope>
    <scope>INTERACTION WITH H1-2; IPO7; LIG3; NCL; PARP1; XRCC1; XRCC5 AND XRCC6</scope>
    <scope>SUBCELLULAR LOCATION</scope>
    <scope>AUTOUBIQUITINATION AT LYS-85; LYS-95; LYS-131 AND LYS-176</scope>
</reference>
<reference key="16">
    <citation type="submission" date="2006-06" db="PDB data bank">
        <title>Solution structure of the RING domain of the human RING finger protein 146.</title>
        <authorList>
            <consortium name="RIKEN structural genomics initiative (RSGI)"/>
        </authorList>
    </citation>
    <scope>STRUCTURE BY NMR OF 24-84</scope>
</reference>
<reference key="17">
    <citation type="journal article" date="2012" name="Genes Dev.">
        <title>Recognition of the iso-ADP-ribose moiety in poly(ADP-ribose) by WWE domains suggests a general mechanism for poly(ADP-ribosyl)ation-dependent ubiquitination.</title>
        <authorList>
            <person name="Wang Z."/>
            <person name="Michaud G.A."/>
            <person name="Cheng Z."/>
            <person name="Zhang Y."/>
            <person name="Hinds T.R."/>
            <person name="Fan E."/>
            <person name="Cong F."/>
            <person name="Xu W."/>
        </authorList>
    </citation>
    <scope>X-RAY CRYSTALLOGRAPHY (1.65 ANGSTROMS) OF 100-184 IN COMPLEX WITH ISO-ADP-RIBOSE</scope>
    <scope>FUNCTION</scope>
    <scope>MUTAGENESIS OF TYR-108; ARG-111; TRP-115; TYR-145; GLN-154; ARG-164 AND LYS-176</scope>
</reference>
<dbReference type="EC" id="2.3.2.27"/>
<dbReference type="EMBL" id="AJ315122">
    <property type="protein sequence ID" value="CAC85986.1"/>
    <property type="molecule type" value="mRNA"/>
</dbReference>
<dbReference type="EMBL" id="AL136829">
    <property type="protein sequence ID" value="CAB66763.1"/>
    <property type="molecule type" value="mRNA"/>
</dbReference>
<dbReference type="EMBL" id="AK027558">
    <property type="protein sequence ID" value="BAB55196.1"/>
    <property type="molecule type" value="mRNA"/>
</dbReference>
<dbReference type="EMBL" id="AK027436">
    <property type="protein sequence ID" value="BAB55108.1"/>
    <property type="molecule type" value="mRNA"/>
</dbReference>
<dbReference type="EMBL" id="AK027776">
    <property type="protein sequence ID" value="BAB55359.1"/>
    <property type="molecule type" value="mRNA"/>
</dbReference>
<dbReference type="EMBL" id="CR533514">
    <property type="protein sequence ID" value="CAG38545.1"/>
    <property type="molecule type" value="mRNA"/>
</dbReference>
<dbReference type="EMBL" id="AL109939">
    <property type="status" value="NOT_ANNOTATED_CDS"/>
    <property type="molecule type" value="Genomic_DNA"/>
</dbReference>
<dbReference type="EMBL" id="CH471051">
    <property type="protein sequence ID" value="EAW48109.1"/>
    <property type="molecule type" value="Genomic_DNA"/>
</dbReference>
<dbReference type="EMBL" id="CH471051">
    <property type="protein sequence ID" value="EAW48111.1"/>
    <property type="molecule type" value="Genomic_DNA"/>
</dbReference>
<dbReference type="EMBL" id="BC008235">
    <property type="protein sequence ID" value="AAH08235.1"/>
    <property type="molecule type" value="mRNA"/>
</dbReference>
<dbReference type="CCDS" id="CCDS5136.1">
    <molecule id="Q9NTX7-2"/>
</dbReference>
<dbReference type="CCDS" id="CCDS56449.1">
    <molecule id="Q9NTX7-1"/>
</dbReference>
<dbReference type="RefSeq" id="NP_001229773.1">
    <molecule id="Q9NTX7-2"/>
    <property type="nucleotide sequence ID" value="NM_001242844.2"/>
</dbReference>
<dbReference type="RefSeq" id="NP_001229774.1">
    <molecule id="Q9NTX7-2"/>
    <property type="nucleotide sequence ID" value="NM_001242845.2"/>
</dbReference>
<dbReference type="RefSeq" id="NP_001229775.1">
    <molecule id="Q9NTX7-2"/>
    <property type="nucleotide sequence ID" value="NM_001242846.2"/>
</dbReference>
<dbReference type="RefSeq" id="NP_001229776.1">
    <molecule id="Q9NTX7-2"/>
    <property type="nucleotide sequence ID" value="NM_001242847.2"/>
</dbReference>
<dbReference type="RefSeq" id="NP_001229777.1">
    <molecule id="Q9NTX7-2"/>
    <property type="nucleotide sequence ID" value="NM_001242848.2"/>
</dbReference>
<dbReference type="RefSeq" id="NP_001229778.1">
    <molecule id="Q9NTX7-1"/>
    <property type="nucleotide sequence ID" value="NM_001242849.2"/>
</dbReference>
<dbReference type="RefSeq" id="NP_001229779.1">
    <molecule id="Q9NTX7-1"/>
    <property type="nucleotide sequence ID" value="NM_001242850.2"/>
</dbReference>
<dbReference type="RefSeq" id="NP_001229780.1">
    <molecule id="Q9NTX7-1"/>
    <property type="nucleotide sequence ID" value="NM_001242851.1"/>
</dbReference>
<dbReference type="RefSeq" id="NP_001229781.1">
    <molecule id="Q9NTX7-2"/>
    <property type="nucleotide sequence ID" value="NM_001242852.2"/>
</dbReference>
<dbReference type="RefSeq" id="NP_112225.2">
    <molecule id="Q9NTX7-2"/>
    <property type="nucleotide sequence ID" value="NM_030963.3"/>
</dbReference>
<dbReference type="RefSeq" id="XP_006715634.1">
    <property type="nucleotide sequence ID" value="XM_006715571.3"/>
</dbReference>
<dbReference type="RefSeq" id="XP_011534463.1">
    <molecule id="Q9NTX7-2"/>
    <property type="nucleotide sequence ID" value="XM_011536161.4"/>
</dbReference>
<dbReference type="RefSeq" id="XP_011534464.1">
    <property type="nucleotide sequence ID" value="XM_011536162.2"/>
</dbReference>
<dbReference type="RefSeq" id="XP_011534465.1">
    <molecule id="Q9NTX7-2"/>
    <property type="nucleotide sequence ID" value="XM_011536163.4"/>
</dbReference>
<dbReference type="RefSeq" id="XP_011534466.1">
    <molecule id="Q9NTX7-2"/>
    <property type="nucleotide sequence ID" value="XM_011536164.4"/>
</dbReference>
<dbReference type="RefSeq" id="XP_016866825.1">
    <molecule id="Q9NTX7-1"/>
    <property type="nucleotide sequence ID" value="XM_017011336.3"/>
</dbReference>
<dbReference type="RefSeq" id="XP_016866826.1">
    <property type="nucleotide sequence ID" value="XM_017011337.1"/>
</dbReference>
<dbReference type="RefSeq" id="XP_016866827.1">
    <property type="nucleotide sequence ID" value="XM_017011338.1"/>
</dbReference>
<dbReference type="RefSeq" id="XP_016866828.1">
    <property type="nucleotide sequence ID" value="XM_017011339.1"/>
</dbReference>
<dbReference type="RefSeq" id="XP_016866829.1">
    <property type="nucleotide sequence ID" value="XM_017011340.1"/>
</dbReference>
<dbReference type="RefSeq" id="XP_016866830.1">
    <property type="nucleotide sequence ID" value="XM_017011341.1"/>
</dbReference>
<dbReference type="RefSeq" id="XP_016866831.1">
    <property type="nucleotide sequence ID" value="XM_017011342.1"/>
</dbReference>
<dbReference type="RefSeq" id="XP_016866832.1">
    <property type="nucleotide sequence ID" value="XM_017011343.1"/>
</dbReference>
<dbReference type="RefSeq" id="XP_047275342.1">
    <molecule id="Q9NTX7-2"/>
    <property type="nucleotide sequence ID" value="XM_047419386.1"/>
</dbReference>
<dbReference type="RefSeq" id="XP_047275343.1">
    <molecule id="Q9NTX7-2"/>
    <property type="nucleotide sequence ID" value="XM_047419387.1"/>
</dbReference>
<dbReference type="RefSeq" id="XP_047275344.1">
    <molecule id="Q9NTX7-2"/>
    <property type="nucleotide sequence ID" value="XM_047419388.1"/>
</dbReference>
<dbReference type="RefSeq" id="XP_047275345.1">
    <molecule id="Q9NTX7-2"/>
    <property type="nucleotide sequence ID" value="XM_047419389.1"/>
</dbReference>
<dbReference type="RefSeq" id="XP_054212474.1">
    <molecule id="Q9NTX7-1"/>
    <property type="nucleotide sequence ID" value="XM_054356499.1"/>
</dbReference>
<dbReference type="RefSeq" id="XP_054212475.1">
    <molecule id="Q9NTX7-2"/>
    <property type="nucleotide sequence ID" value="XM_054356500.1"/>
</dbReference>
<dbReference type="RefSeq" id="XP_054212476.1">
    <molecule id="Q9NTX7-2"/>
    <property type="nucleotide sequence ID" value="XM_054356501.1"/>
</dbReference>
<dbReference type="RefSeq" id="XP_054212477.1">
    <molecule id="Q9NTX7-2"/>
    <property type="nucleotide sequence ID" value="XM_054356502.1"/>
</dbReference>
<dbReference type="RefSeq" id="XP_054212478.1">
    <molecule id="Q9NTX7-2"/>
    <property type="nucleotide sequence ID" value="XM_054356503.1"/>
</dbReference>
<dbReference type="RefSeq" id="XP_054212479.1">
    <molecule id="Q9NTX7-2"/>
    <property type="nucleotide sequence ID" value="XM_054356504.1"/>
</dbReference>
<dbReference type="RefSeq" id="XP_054212480.1">
    <molecule id="Q9NTX7-2"/>
    <property type="nucleotide sequence ID" value="XM_054356505.1"/>
</dbReference>
<dbReference type="RefSeq" id="XP_054212481.1">
    <molecule id="Q9NTX7-2"/>
    <property type="nucleotide sequence ID" value="XM_054356506.1"/>
</dbReference>
<dbReference type="PDB" id="2D8T">
    <property type="method" value="NMR"/>
    <property type="chains" value="A=27-84"/>
</dbReference>
<dbReference type="PDB" id="3V3L">
    <property type="method" value="X-ray"/>
    <property type="resolution" value="1.65 A"/>
    <property type="chains" value="A/B=100-184"/>
</dbReference>
<dbReference type="PDB" id="6CF6">
    <property type="method" value="X-ray"/>
    <property type="resolution" value="1.93 A"/>
    <property type="chains" value="C/D=191-203"/>
</dbReference>
<dbReference type="PDBsum" id="2D8T"/>
<dbReference type="PDBsum" id="3V3L"/>
<dbReference type="PDBsum" id="6CF6"/>
<dbReference type="SMR" id="Q9NTX7"/>
<dbReference type="BioGRID" id="123598">
    <property type="interactions" value="75"/>
</dbReference>
<dbReference type="DIP" id="DIP-52730N"/>
<dbReference type="FunCoup" id="Q9NTX7">
    <property type="interactions" value="2943"/>
</dbReference>
<dbReference type="IntAct" id="Q9NTX7">
    <property type="interactions" value="50"/>
</dbReference>
<dbReference type="MINT" id="Q9NTX7"/>
<dbReference type="STRING" id="9606.ENSP00000357297"/>
<dbReference type="GlyCosmos" id="Q9NTX7">
    <property type="glycosylation" value="1 site, 1 glycan"/>
</dbReference>
<dbReference type="GlyGen" id="Q9NTX7">
    <property type="glycosylation" value="2 sites, 1 O-linked glycan (1 site)"/>
</dbReference>
<dbReference type="iPTMnet" id="Q9NTX7"/>
<dbReference type="PhosphoSitePlus" id="Q9NTX7"/>
<dbReference type="BioMuta" id="RNF146"/>
<dbReference type="DMDM" id="60390653"/>
<dbReference type="jPOST" id="Q9NTX7"/>
<dbReference type="MassIVE" id="Q9NTX7"/>
<dbReference type="PaxDb" id="9606-ENSP00000357297"/>
<dbReference type="PeptideAtlas" id="Q9NTX7"/>
<dbReference type="ProteomicsDB" id="82642">
    <molecule id="Q9NTX7-1"/>
</dbReference>
<dbReference type="ProteomicsDB" id="82643">
    <molecule id="Q9NTX7-2"/>
</dbReference>
<dbReference type="Pumba" id="Q9NTX7"/>
<dbReference type="Antibodypedia" id="19579">
    <property type="antibodies" value="65 antibodies from 17 providers"/>
</dbReference>
<dbReference type="DNASU" id="81847"/>
<dbReference type="Ensembl" id="ENST00000368314.6">
    <molecule id="Q9NTX7-1"/>
    <property type="protein sequence ID" value="ENSP00000357297.1"/>
    <property type="gene ID" value="ENSG00000118518.17"/>
</dbReference>
<dbReference type="Ensembl" id="ENST00000608991.5">
    <molecule id="Q9NTX7-2"/>
    <property type="protein sequence ID" value="ENSP00000477168.1"/>
    <property type="gene ID" value="ENSG00000118518.17"/>
</dbReference>
<dbReference type="Ensembl" id="ENST00000610153.1">
    <molecule id="Q9NTX7-1"/>
    <property type="protein sequence ID" value="ENSP00000476814.1"/>
    <property type="gene ID" value="ENSG00000118518.17"/>
</dbReference>
<dbReference type="GeneID" id="81847"/>
<dbReference type="KEGG" id="hsa:81847"/>
<dbReference type="MANE-Select" id="ENST00000368314.6">
    <property type="protein sequence ID" value="ENSP00000357297.1"/>
    <property type="RefSeq nucleotide sequence ID" value="NM_001242850.2"/>
    <property type="RefSeq protein sequence ID" value="NP_001229779.1"/>
</dbReference>
<dbReference type="UCSC" id="uc003qav.4">
    <molecule id="Q9NTX7-1"/>
    <property type="organism name" value="human"/>
</dbReference>
<dbReference type="AGR" id="HGNC:21336"/>
<dbReference type="CTD" id="81847"/>
<dbReference type="DisGeNET" id="81847"/>
<dbReference type="GeneCards" id="RNF146"/>
<dbReference type="HGNC" id="HGNC:21336">
    <property type="gene designation" value="RNF146"/>
</dbReference>
<dbReference type="HPA" id="ENSG00000118518">
    <property type="expression patterns" value="Low tissue specificity"/>
</dbReference>
<dbReference type="MIM" id="612137">
    <property type="type" value="gene"/>
</dbReference>
<dbReference type="neXtProt" id="NX_Q9NTX7"/>
<dbReference type="OpenTargets" id="ENSG00000118518"/>
<dbReference type="PharmGKB" id="PA134910489"/>
<dbReference type="VEuPathDB" id="HostDB:ENSG00000118518"/>
<dbReference type="eggNOG" id="KOG0824">
    <property type="taxonomic scope" value="Eukaryota"/>
</dbReference>
<dbReference type="GeneTree" id="ENSGT00390000000358"/>
<dbReference type="HOGENOM" id="CLU_067425_0_0_1"/>
<dbReference type="InParanoid" id="Q9NTX7"/>
<dbReference type="OMA" id="KMAGCGE"/>
<dbReference type="OrthoDB" id="10065815at2759"/>
<dbReference type="PAN-GO" id="Q9NTX7">
    <property type="GO annotations" value="5 GO annotations based on evolutionary models"/>
</dbReference>
<dbReference type="PhylomeDB" id="Q9NTX7"/>
<dbReference type="TreeFam" id="TF318925"/>
<dbReference type="PathwayCommons" id="Q9NTX7"/>
<dbReference type="Reactome" id="R-HSA-201681">
    <property type="pathway name" value="TCF dependent signaling in response to WNT"/>
</dbReference>
<dbReference type="Reactome" id="R-HSA-4641257">
    <property type="pathway name" value="Degradation of AXIN"/>
</dbReference>
<dbReference type="Reactome" id="R-HSA-5689880">
    <property type="pathway name" value="Ub-specific processing proteases"/>
</dbReference>
<dbReference type="Reactome" id="R-HSA-8948751">
    <property type="pathway name" value="Regulation of PTEN stability and activity"/>
</dbReference>
<dbReference type="SignaLink" id="Q9NTX7"/>
<dbReference type="SIGNOR" id="Q9NTX7"/>
<dbReference type="UniPathway" id="UPA00143"/>
<dbReference type="BioGRID-ORCS" id="81847">
    <property type="hits" value="44 hits in 1216 CRISPR screens"/>
</dbReference>
<dbReference type="ChiTaRS" id="RNF146">
    <property type="organism name" value="human"/>
</dbReference>
<dbReference type="EvolutionaryTrace" id="Q9NTX7"/>
<dbReference type="GeneWiki" id="RNF146"/>
<dbReference type="GenomeRNAi" id="81847"/>
<dbReference type="Pharos" id="Q9NTX7">
    <property type="development level" value="Tbio"/>
</dbReference>
<dbReference type="PRO" id="PR:Q9NTX7"/>
<dbReference type="Proteomes" id="UP000005640">
    <property type="component" value="Chromosome 6"/>
</dbReference>
<dbReference type="RNAct" id="Q9NTX7">
    <property type="molecule type" value="protein"/>
</dbReference>
<dbReference type="Bgee" id="ENSG00000118518">
    <property type="expression patterns" value="Expressed in cerebellar vermis and 194 other cell types or tissues"/>
</dbReference>
<dbReference type="ExpressionAtlas" id="Q9NTX7">
    <property type="expression patterns" value="baseline and differential"/>
</dbReference>
<dbReference type="GO" id="GO:0005737">
    <property type="term" value="C:cytoplasm"/>
    <property type="evidence" value="ECO:0000318"/>
    <property type="project" value="GO_Central"/>
</dbReference>
<dbReference type="GO" id="GO:0005829">
    <property type="term" value="C:cytosol"/>
    <property type="evidence" value="ECO:0000314"/>
    <property type="project" value="HPA"/>
</dbReference>
<dbReference type="GO" id="GO:0005654">
    <property type="term" value="C:nucleoplasm"/>
    <property type="evidence" value="ECO:0000314"/>
    <property type="project" value="HPA"/>
</dbReference>
<dbReference type="GO" id="GO:0005634">
    <property type="term" value="C:nucleus"/>
    <property type="evidence" value="ECO:0000318"/>
    <property type="project" value="GO_Central"/>
</dbReference>
<dbReference type="GO" id="GO:0005886">
    <property type="term" value="C:plasma membrane"/>
    <property type="evidence" value="ECO:0000314"/>
    <property type="project" value="HPA"/>
</dbReference>
<dbReference type="GO" id="GO:0072572">
    <property type="term" value="F:poly-ADP-D-ribose binding"/>
    <property type="evidence" value="ECO:0000314"/>
    <property type="project" value="UniProtKB"/>
</dbReference>
<dbReference type="GO" id="GO:0061630">
    <property type="term" value="F:ubiquitin protein ligase activity"/>
    <property type="evidence" value="ECO:0000304"/>
    <property type="project" value="Reactome"/>
</dbReference>
<dbReference type="GO" id="GO:0004842">
    <property type="term" value="F:ubiquitin-protein transferase activity"/>
    <property type="evidence" value="ECO:0000314"/>
    <property type="project" value="UniProtKB"/>
</dbReference>
<dbReference type="GO" id="GO:0008270">
    <property type="term" value="F:zinc ion binding"/>
    <property type="evidence" value="ECO:0007669"/>
    <property type="project" value="UniProtKB-KW"/>
</dbReference>
<dbReference type="GO" id="GO:0090263">
    <property type="term" value="P:positive regulation of canonical Wnt signaling pathway"/>
    <property type="evidence" value="ECO:0000315"/>
    <property type="project" value="UniProtKB"/>
</dbReference>
<dbReference type="GO" id="GO:0051865">
    <property type="term" value="P:protein autoubiquitination"/>
    <property type="evidence" value="ECO:0000314"/>
    <property type="project" value="UniProtKB"/>
</dbReference>
<dbReference type="GO" id="GO:0070936">
    <property type="term" value="P:protein K48-linked ubiquitination"/>
    <property type="evidence" value="ECO:0000315"/>
    <property type="project" value="UniProtKB"/>
</dbReference>
<dbReference type="GO" id="GO:0006511">
    <property type="term" value="P:ubiquitin-dependent protein catabolic process"/>
    <property type="evidence" value="ECO:0000315"/>
    <property type="project" value="UniProtKB"/>
</dbReference>
<dbReference type="GO" id="GO:0016055">
    <property type="term" value="P:Wnt signaling pathway"/>
    <property type="evidence" value="ECO:0007669"/>
    <property type="project" value="UniProtKB-KW"/>
</dbReference>
<dbReference type="CDD" id="cd16546">
    <property type="entry name" value="RING-HC_RNF146"/>
    <property type="match status" value="1"/>
</dbReference>
<dbReference type="FunFam" id="3.30.40.10:FF:000204">
    <property type="entry name" value="E3 ubiquitin-protein ligase RNF146"/>
    <property type="match status" value="1"/>
</dbReference>
<dbReference type="FunFam" id="3.30.720.50:FF:000003">
    <property type="entry name" value="E3 ubiquitin-protein ligase RNF146"/>
    <property type="match status" value="1"/>
</dbReference>
<dbReference type="Gene3D" id="3.30.720.50">
    <property type="match status" value="1"/>
</dbReference>
<dbReference type="Gene3D" id="3.30.40.10">
    <property type="entry name" value="Zinc/RING finger domain, C3HC4 (zinc finger)"/>
    <property type="match status" value="1"/>
</dbReference>
<dbReference type="InterPro" id="IPR044110">
    <property type="entry name" value="RING-HC_RNF146"/>
</dbReference>
<dbReference type="InterPro" id="IPR033509">
    <property type="entry name" value="RNF146"/>
</dbReference>
<dbReference type="InterPro" id="IPR018123">
    <property type="entry name" value="WWE-dom_subgr"/>
</dbReference>
<dbReference type="InterPro" id="IPR004170">
    <property type="entry name" value="WWE_dom"/>
</dbReference>
<dbReference type="InterPro" id="IPR037197">
    <property type="entry name" value="WWE_dom_sf"/>
</dbReference>
<dbReference type="InterPro" id="IPR001841">
    <property type="entry name" value="Znf_RING"/>
</dbReference>
<dbReference type="InterPro" id="IPR013083">
    <property type="entry name" value="Znf_RING/FYVE/PHD"/>
</dbReference>
<dbReference type="InterPro" id="IPR017907">
    <property type="entry name" value="Znf_RING_CS"/>
</dbReference>
<dbReference type="PANTHER" id="PTHR13417">
    <property type="entry name" value="E3 UBIQUITIN-PROTEIN LIGASE RNF146"/>
    <property type="match status" value="1"/>
</dbReference>
<dbReference type="PANTHER" id="PTHR13417:SF2">
    <property type="entry name" value="E3 UBIQUITIN-PROTEIN LIGASE RNF146"/>
    <property type="match status" value="1"/>
</dbReference>
<dbReference type="Pfam" id="PF02825">
    <property type="entry name" value="WWE"/>
    <property type="match status" value="1"/>
</dbReference>
<dbReference type="Pfam" id="PF13920">
    <property type="entry name" value="zf-C3HC4_3"/>
    <property type="match status" value="1"/>
</dbReference>
<dbReference type="SMART" id="SM00184">
    <property type="entry name" value="RING"/>
    <property type="match status" value="1"/>
</dbReference>
<dbReference type="SMART" id="SM00678">
    <property type="entry name" value="WWE"/>
    <property type="match status" value="1"/>
</dbReference>
<dbReference type="SUPFAM" id="SSF57850">
    <property type="entry name" value="RING/U-box"/>
    <property type="match status" value="1"/>
</dbReference>
<dbReference type="SUPFAM" id="SSF117839">
    <property type="entry name" value="WWE domain"/>
    <property type="match status" value="1"/>
</dbReference>
<dbReference type="PROSITE" id="PS50918">
    <property type="entry name" value="WWE"/>
    <property type="match status" value="1"/>
</dbReference>
<dbReference type="PROSITE" id="PS00518">
    <property type="entry name" value="ZF_RING_1"/>
    <property type="match status" value="1"/>
</dbReference>
<dbReference type="PROSITE" id="PS50089">
    <property type="entry name" value="ZF_RING_2"/>
    <property type="match status" value="1"/>
</dbReference>
<evidence type="ECO:0000250" key="1">
    <source>
        <dbReference type="UniProtKB" id="Q5XIK5"/>
    </source>
</evidence>
<evidence type="ECO:0000250" key="2">
    <source>
        <dbReference type="UniProtKB" id="Q9CZW6"/>
    </source>
</evidence>
<evidence type="ECO:0000255" key="3">
    <source>
        <dbReference type="PROSITE-ProRule" id="PRU00175"/>
    </source>
</evidence>
<evidence type="ECO:0000255" key="4">
    <source>
        <dbReference type="PROSITE-ProRule" id="PRU00248"/>
    </source>
</evidence>
<evidence type="ECO:0000256" key="5">
    <source>
        <dbReference type="SAM" id="MobiDB-lite"/>
    </source>
</evidence>
<evidence type="ECO:0000269" key="6">
    <source>
    </source>
</evidence>
<evidence type="ECO:0000269" key="7">
    <source>
    </source>
</evidence>
<evidence type="ECO:0000269" key="8">
    <source>
    </source>
</evidence>
<evidence type="ECO:0000269" key="9">
    <source>
    </source>
</evidence>
<evidence type="ECO:0000269" key="10">
    <source>
    </source>
</evidence>
<evidence type="ECO:0000303" key="11">
    <source>
    </source>
</evidence>
<evidence type="ECO:0000303" key="12">
    <source>
    </source>
</evidence>
<evidence type="ECO:0000303" key="13">
    <source>
    </source>
</evidence>
<evidence type="ECO:0000303" key="14">
    <source>
    </source>
</evidence>
<evidence type="ECO:0000303" key="15">
    <source ref="4"/>
</evidence>
<evidence type="ECO:0000305" key="16"/>
<evidence type="ECO:0000305" key="17">
    <source>
    </source>
</evidence>
<evidence type="ECO:0000305" key="18">
    <source>
    </source>
</evidence>
<evidence type="ECO:0007829" key="19">
    <source>
        <dbReference type="PDB" id="2D8T"/>
    </source>
</evidence>
<evidence type="ECO:0007829" key="20">
    <source>
        <dbReference type="PDB" id="3V3L"/>
    </source>
</evidence>
<proteinExistence type="evidence at protein level"/>
<sequence length="359" mass="38950">MMAGCGEIDHSINMLPTNRKANESCSNTAPSLTVPECAICLQTCVHPVSLPCKHVFCYLCVKGASWLGKRCALCRQEIPEDFLDKPTLLSPEELKAASRGNGEYAWYYEGRNGWWQYDERTSRELEDAFSKGKKNTEMLIAGFLYVADLENMVQYRRNEHGRRRKIKRDIIDIPKKGVAGLRLDCDANTVNLARESSADGADSVSAQSGASVQPLVSSVRPLTSVDGQLTSPATPSPDASTSLEDSFAHLQLSGDNTAERSHRGEGEEDHESPSSGRVPAPDTSIEETESDASSDSEDVSAVVAQHSLTQQRLLVSNANQTVPDRSDRSGTDRSVAGGGTVSVSVRSRRPDGQCTVTEV</sequence>
<comment type="function">
    <text evidence="2 6 7 8 9 10">E3 ubiquitin-protein ligase that specifically binds poly-ADP-ribosylated (PARsylated) proteins and mediates their ubiquitination and subsequent degradation (PubMed:21478859, PubMed:21799911, PubMed:22267412). May regulate many important biological processes, such as cell survival and DNA damage response (PubMed:21825151, PubMed:22267412). Acts as an activator of the Wnt signaling pathway by mediating the ubiquitination of PARsylated AXIN1 and AXIN2, 2 key components of the beta-catenin destruction complex (PubMed:21478859, PubMed:21799911). Acts in cooperation with tankyrase proteins (TNKS and TNKS2), which mediate PARsylation of target proteins AXIN1, AXIN2, BLZF1, CASC3, TNKS and TNKS2 (PubMed:21799911). Recognizes and binds tankyrase-dependent PARsylated proteins via its WWE domain and mediates their ubiquitination, leading to their degradation (PubMed:21799911). Different ubiquitin linkage types have been observed: TNKS2 undergoes ubiquitination at 'Lys-48' and 'Lys-63', while AXIN1 is only ubiquitinated at 'Lys-48' (PubMed:21799911). May regulate TNKS and TNKS2 subcellular location, preventing aggregation at a centrosomal location (PubMed:21799911). Neuroprotective protein (PubMed:21602803). Protects the brain against N-methyl-D-aspartate (NMDA) receptor-mediated glutamate excitotoxicity and ischemia, by interfering with PAR-induced cell death, called parthanatos (By similarity). Prevents nuclear translocation of AIFM1 in a PAR-binding dependent manner (By similarity). Does not affect PARP1 activation (By similarity). Protects against cell death induced by DNA damaging agents, such as N-methyl-N-nitro-N-nitrosoguanidine (MNNG) and rescues cells from G1 arrest (By similarity). Promotes cell survival after gamma-irradiation (PubMed:21825151). Facilitates DNA repair (PubMed:21825151).</text>
</comment>
<comment type="catalytic activity">
    <reaction>
        <text>S-ubiquitinyl-[E2 ubiquitin-conjugating enzyme]-L-cysteine + [acceptor protein]-L-lysine = [E2 ubiquitin-conjugating enzyme]-L-cysteine + N(6)-ubiquitinyl-[acceptor protein]-L-lysine.</text>
        <dbReference type="EC" id="2.3.2.27"/>
    </reaction>
</comment>
<comment type="pathway">
    <text evidence="6">Protein modification; protein ubiquitination.</text>
</comment>
<comment type="subunit">
    <text evidence="6 8 9 10">Can form homooligomers. Interacts with PARsylated AXIN1, AXIN2, BLZF1, CASC3, H1-2, IPO7, LIG3, NCL, PARP1, XRCC1, XRCC5 and XRCC6. Interacts with DDB1, DHX15, IQGAP1, LRPPRC, PARP2, PRKDC, RUVBL2, TNKS1 and TNKS2. Binding often leads to interactor ubiquitination, in the presence of the appropriate E1 and E2 enzymes, and proteasomal degradation.</text>
</comment>
<comment type="interaction">
    <interactant intactId="EBI-722397">
        <id>Q9NTX7</id>
    </interactant>
    <interactant intactId="EBI-749265">
        <id>Q8N6L0</id>
        <label>KASH5</label>
    </interactant>
    <organismsDiffer>false</organismsDiffer>
    <experiments>3</experiments>
</comment>
<comment type="interaction">
    <interactant intactId="EBI-722397">
        <id>Q9NTX7</id>
    </interactant>
    <interactant intactId="EBI-355676">
        <id>P09874</id>
        <label>PARP1</label>
    </interactant>
    <organismsDiffer>false</organismsDiffer>
    <experiments>5</experiments>
</comment>
<comment type="interaction">
    <interactant intactId="EBI-722397">
        <id>Q9NTX7</id>
    </interactant>
    <interactant intactId="EBI-1105254">
        <id>O95271</id>
        <label>TNKS</label>
    </interactant>
    <organismsDiffer>false</organismsDiffer>
    <experiments>6</experiments>
</comment>
<comment type="interaction">
    <interactant intactId="EBI-722397">
        <id>Q9NTX7</id>
    </interactant>
    <interactant intactId="EBI-355744">
        <id>Q12933</id>
        <label>TRAF2</label>
    </interactant>
    <organismsDiffer>false</organismsDiffer>
    <experiments>3</experiments>
</comment>
<comment type="interaction">
    <interactant intactId="EBI-722397">
        <id>Q9NTX7</id>
    </interactant>
    <interactant intactId="EBI-1052544">
        <id>Q9UGJ1</id>
        <label>TUBGCP4</label>
    </interactant>
    <organismsDiffer>false</organismsDiffer>
    <experiments>3</experiments>
</comment>
<comment type="interaction">
    <interactant intactId="EBI-11750630">
        <id>Q9NTX7-2</id>
    </interactant>
    <interactant intactId="EBI-749265">
        <id>Q8N6L0</id>
        <label>KASH5</label>
    </interactant>
    <organismsDiffer>false</organismsDiffer>
    <experiments>7</experiments>
</comment>
<comment type="interaction">
    <interactant intactId="EBI-11750630">
        <id>Q9NTX7-2</id>
    </interactant>
    <interactant intactId="EBI-2114801">
        <id>Q9BU61</id>
        <label>NDUFAF3</label>
    </interactant>
    <organismsDiffer>false</organismsDiffer>
    <experiments>3</experiments>
</comment>
<comment type="interaction">
    <interactant intactId="EBI-11750630">
        <id>Q9NTX7-2</id>
    </interactant>
    <interactant intactId="EBI-748312">
        <id>P49821</id>
        <label>NDUFV1</label>
    </interactant>
    <organismsDiffer>false</organismsDiffer>
    <experiments>3</experiments>
</comment>
<comment type="interaction">
    <interactant intactId="EBI-11750630">
        <id>Q9NTX7-2</id>
    </interactant>
    <interactant intactId="EBI-355744">
        <id>Q12933</id>
        <label>TRAF2</label>
    </interactant>
    <organismsDiffer>false</organismsDiffer>
    <experiments>3</experiments>
</comment>
<comment type="interaction">
    <interactant intactId="EBI-11750630">
        <id>Q9NTX7-2</id>
    </interactant>
    <interactant intactId="EBI-720609">
        <id>O76024</id>
        <label>WFS1</label>
    </interactant>
    <organismsDiffer>false</organismsDiffer>
    <experiments>3</experiments>
</comment>
<comment type="subcellular location">
    <subcellularLocation>
        <location>Cytoplasm</location>
        <location>Cytosol</location>
    </subcellularLocation>
    <subcellularLocation>
        <location>Nucleus</location>
    </subcellularLocation>
    <text>Translocates to the nucleus after DNA damage, such as laser-induced DNA breaks, and concentrates at DNA breaks. This translocation requires PARP1 activation and PAR-binding.</text>
</comment>
<comment type="alternative products">
    <event type="alternative splicing"/>
    <isoform>
        <id>Q9NTX7-1</id>
        <name>1</name>
        <sequence type="displayed"/>
    </isoform>
    <isoform>
        <id>Q9NTX7-2</id>
        <name>2</name>
        <sequence type="described" ref="VSP_012968"/>
    </isoform>
</comment>
<comment type="tissue specificity">
    <text>Ubiquitously expressed. Up-regulated in brains from patients with Alzheimer disease.</text>
</comment>
<comment type="domain">
    <text evidence="6">The WWE domain mediates non-covalent PAR-binding.</text>
</comment>
<comment type="PTM">
    <text evidence="6 8 9">Ubiquitinated; autoubiquitinated. Polyubiquitinated in the presence of UBE2D1, UBE2D2 and UBE2D3. Multimonoubiquitinated in the presence of UBE2E1. Not ubiquitinated in the presence of UBE2H, CDC34, UBE2L3, UBE2L6, nor UBE2C. In the absence of PAR, autoubiquitination occurs on Lys-85, Lys-95 and Lys-176 via 'Lys-11' and 'Lys-48' ubiquitin linkages. In the presence of PAR, Lys-131 and Lys-176 are ubiquitinated via 'Lys-6', 'Lys-33' and 'Lys-48' ubiquitin linkages. Autoubiquitination is enhanced upon PAR-binding.</text>
</comment>
<comment type="disease">
    <text>Defects in RNF146 are a cause of susceptibility to breast cancer.</text>
</comment>
<comment type="miscellaneous">
    <text evidence="17 18">Was named dactylidin after the Greek term 'daktylidi' for ring, 'the thing around the finger' (PubMed:15813938). Was named Iduna after the Norse goddess of protection and eternal youth (PubMed:21602803).</text>
</comment>
<keyword id="KW-0002">3D-structure</keyword>
<keyword id="KW-0025">Alternative splicing</keyword>
<keyword id="KW-0963">Cytoplasm</keyword>
<keyword id="KW-1017">Isopeptide bond</keyword>
<keyword id="KW-0479">Metal-binding</keyword>
<keyword id="KW-0539">Nucleus</keyword>
<keyword id="KW-0597">Phosphoprotein</keyword>
<keyword id="KW-1267">Proteomics identification</keyword>
<keyword id="KW-1185">Reference proteome</keyword>
<keyword id="KW-0808">Transferase</keyword>
<keyword id="KW-0832">Ubl conjugation</keyword>
<keyword id="KW-0833">Ubl conjugation pathway</keyword>
<keyword id="KW-0879">Wnt signaling pathway</keyword>
<keyword id="KW-0862">Zinc</keyword>
<keyword id="KW-0863">Zinc-finger</keyword>
<feature type="chain" id="PRO_0000056107" description="E3 ubiquitin-protein ligase RNF146">
    <location>
        <begin position="1"/>
        <end position="359"/>
    </location>
</feature>
<feature type="domain" description="WWE" evidence="4">
    <location>
        <begin position="92"/>
        <end position="168"/>
    </location>
</feature>
<feature type="zinc finger region" description="RING-type" evidence="3">
    <location>
        <begin position="37"/>
        <end position="75"/>
    </location>
</feature>
<feature type="region of interest" description="Disordered" evidence="5">
    <location>
        <begin position="254"/>
        <end position="359"/>
    </location>
</feature>
<feature type="compositionally biased region" description="Acidic residues" evidence="5">
    <location>
        <begin position="284"/>
        <end position="298"/>
    </location>
</feature>
<feature type="compositionally biased region" description="Polar residues" evidence="5">
    <location>
        <begin position="306"/>
        <end position="323"/>
    </location>
</feature>
<feature type="binding site" evidence="10">
    <location>
        <position position="108"/>
    </location>
    <ligand>
        <name>a glycoprotein</name>
        <dbReference type="ChEBI" id="CHEBI:17089"/>
    </ligand>
    <ligandPart>
        <name>poly[(1''-&gt;2')-ADP-alpha-D-ribose] group</name>
        <dbReference type="ChEBI" id="CHEBI:157741"/>
    </ligandPart>
</feature>
<feature type="binding site" evidence="10">
    <location>
        <position position="111"/>
    </location>
    <ligand>
        <name>a glycoprotein</name>
        <dbReference type="ChEBI" id="CHEBI:17089"/>
    </ligand>
    <ligandPart>
        <name>poly[(1''-&gt;2')-ADP-alpha-D-ribose] group</name>
        <dbReference type="ChEBI" id="CHEBI:157741"/>
    </ligandPart>
</feature>
<feature type="binding site" evidence="10">
    <location>
        <position position="115"/>
    </location>
    <ligand>
        <name>a glycoprotein</name>
        <dbReference type="ChEBI" id="CHEBI:17089"/>
    </ligand>
    <ligandPart>
        <name>poly[(1''-&gt;2')-ADP-alpha-D-ribose] group</name>
        <dbReference type="ChEBI" id="CHEBI:157741"/>
    </ligandPart>
</feature>
<feature type="binding site" evidence="10">
    <location>
        <position position="145"/>
    </location>
    <ligand>
        <name>a glycoprotein</name>
        <dbReference type="ChEBI" id="CHEBI:17089"/>
    </ligand>
    <ligandPart>
        <name>poly[(1''-&gt;2')-ADP-alpha-D-ribose] group</name>
        <dbReference type="ChEBI" id="CHEBI:157741"/>
    </ligandPart>
</feature>
<feature type="binding site" evidence="10">
    <location>
        <position position="154"/>
    </location>
    <ligand>
        <name>a glycoprotein</name>
        <dbReference type="ChEBI" id="CHEBI:17089"/>
    </ligand>
    <ligandPart>
        <name>poly[(1''-&gt;2')-ADP-alpha-D-ribose] group</name>
        <dbReference type="ChEBI" id="CHEBI:157741"/>
    </ligandPart>
</feature>
<feature type="binding site" evidence="10">
    <location>
        <position position="164"/>
    </location>
    <ligand>
        <name>a glycoprotein</name>
        <dbReference type="ChEBI" id="CHEBI:17089"/>
    </ligand>
    <ligandPart>
        <name>poly[(1''-&gt;2')-ADP-alpha-D-ribose] group</name>
        <dbReference type="ChEBI" id="CHEBI:157741"/>
    </ligandPart>
</feature>
<feature type="binding site" evidence="10">
    <location>
        <position position="176"/>
    </location>
    <ligand>
        <name>a glycoprotein</name>
        <dbReference type="ChEBI" id="CHEBI:17089"/>
    </ligand>
    <ligandPart>
        <name>poly[(1''-&gt;2')-ADP-alpha-D-ribose] group</name>
        <dbReference type="ChEBI" id="CHEBI:157741"/>
    </ligandPart>
</feature>
<feature type="modified residue" description="Phosphoserine" evidence="1">
    <location>
        <position position="290"/>
    </location>
</feature>
<feature type="modified residue" description="Phosphoserine" evidence="1">
    <location>
        <position position="294"/>
    </location>
</feature>
<feature type="cross-link" description="Glycyl lysine isopeptide (Lys-Gly) (interchain with G-Cter in ubiquitin)" evidence="9">
    <location>
        <position position="85"/>
    </location>
</feature>
<feature type="cross-link" description="Glycyl lysine isopeptide (Lys-Gly) (interchain with G-Cter in ubiquitin)" evidence="9">
    <location>
        <position position="95"/>
    </location>
</feature>
<feature type="cross-link" description="Glycyl lysine isopeptide (Lys-Gly) (interchain with G-Cter in ubiquitin)" evidence="9">
    <location>
        <position position="131"/>
    </location>
</feature>
<feature type="cross-link" description="Glycyl lysine isopeptide (Lys-Gly) (interchain with G-Cter in ubiquitin)" evidence="9">
    <location>
        <position position="176"/>
    </location>
</feature>
<feature type="splice variant" id="VSP_012968" description="In isoform 2." evidence="11 12 13 14 15">
    <location>
        <position position="1"/>
    </location>
</feature>
<feature type="sequence variant" id="VAR_065249" description="In dbSNP:rs10081141.">
    <original>C</original>
    <variation>R</variation>
    <location>
        <position position="25"/>
    </location>
</feature>
<feature type="mutagenesis site" description="Partially suppression of WNT3A signaling and stabilization of AXIN1, TNKS and TNKS2 with or without WNT3A induction. No effect on TNKS1-binding." evidence="8">
    <original>H</original>
    <variation>A</variation>
    <location>
        <position position="54"/>
    </location>
</feature>
<feature type="mutagenesis site" description="No effect on Wnt signaling pathway." evidence="8">
    <original>W</original>
    <variation>A</variation>
    <location>
        <position position="106"/>
    </location>
</feature>
<feature type="mutagenesis site" description="Loss of iso-ADP-ribose-binding." evidence="10">
    <original>Y</original>
    <variation>A</variation>
    <location>
        <position position="108"/>
    </location>
</feature>
<feature type="mutagenesis site" description="Minor effect on iso-ADP-ribose-binding." evidence="10">
    <original>R</original>
    <variation>A</variation>
    <location>
        <position position="111"/>
    </location>
</feature>
<feature type="mutagenesis site" description="Strong decrease in iso-ADP-ribose-binding affinity." evidence="10">
    <original>W</original>
    <variation>A</variation>
    <location>
        <position position="115"/>
    </location>
</feature>
<feature type="mutagenesis site" description="Loss of iso-ADP-ribose-binding." evidence="10">
    <original>Y</original>
    <variation>A</variation>
    <location>
        <position position="145"/>
    </location>
</feature>
<feature type="mutagenesis site" description="Loss of iso-ADP-ribose-binding affinity." evidence="10">
    <original>Q</original>
    <variation>A</variation>
    <location>
        <position position="154"/>
    </location>
</feature>
<feature type="mutagenesis site" description="Abolishes the ability to recognize and bind PARsylated proteins." evidence="6">
    <original>R</original>
    <variation>A</variation>
    <location>
        <position position="163"/>
    </location>
</feature>
<feature type="mutagenesis site" description="Loss of iso-ADP-ribose-binding." evidence="10">
    <original>R</original>
    <variation>A</variation>
    <location>
        <position position="164"/>
    </location>
</feature>
<feature type="mutagenesis site" description="Minor effect on iso-ADP-ribose-binding." evidence="10">
    <original>K</original>
    <variation>A</variation>
    <location>
        <position position="176"/>
    </location>
</feature>
<feature type="sequence conflict" description="In Ref. 3; BAB55359." evidence="16" ref="3">
    <original>K</original>
    <variation>R</variation>
    <location>
        <position position="69"/>
    </location>
</feature>
<feature type="sequence conflict" description="In Ref. 3; BAB55108." evidence="16" ref="3">
    <original>C</original>
    <variation>R</variation>
    <location>
        <position position="74"/>
    </location>
</feature>
<feature type="sequence conflict" description="In Ref. 4; CAG38545." evidence="16" ref="4">
    <original>G</original>
    <variation>E</variation>
    <location>
        <position position="100"/>
    </location>
</feature>
<feature type="sequence conflict" description="In Ref. 4; CAG38545." evidence="16" ref="4">
    <original>I</original>
    <variation>V</variation>
    <location>
        <position position="166"/>
    </location>
</feature>
<feature type="sequence conflict" description="In Ref. 3; BAB55108." evidence="16" ref="3">
    <original>L</original>
    <variation>S</variation>
    <location>
        <position position="229"/>
    </location>
</feature>
<feature type="sequence conflict" description="In Ref. 3; BAB55108." evidence="16" ref="3">
    <original>S</original>
    <variation>L</variation>
    <location>
        <position position="329"/>
    </location>
</feature>
<feature type="strand" evidence="19">
    <location>
        <begin position="30"/>
        <end position="33"/>
    </location>
</feature>
<feature type="strand" evidence="19">
    <location>
        <begin position="38"/>
        <end position="43"/>
    </location>
</feature>
<feature type="strand" evidence="19">
    <location>
        <begin position="45"/>
        <end position="50"/>
    </location>
</feature>
<feature type="turn" evidence="19">
    <location>
        <begin position="51"/>
        <end position="53"/>
    </location>
</feature>
<feature type="strand" evidence="19">
    <location>
        <begin position="54"/>
        <end position="57"/>
    </location>
</feature>
<feature type="helix" evidence="19">
    <location>
        <begin position="58"/>
        <end position="63"/>
    </location>
</feature>
<feature type="strand" evidence="19">
    <location>
        <begin position="68"/>
        <end position="70"/>
    </location>
</feature>
<feature type="strand" evidence="19">
    <location>
        <begin position="72"/>
        <end position="74"/>
    </location>
</feature>
<feature type="helix" evidence="19">
    <location>
        <begin position="80"/>
        <end position="83"/>
    </location>
</feature>
<feature type="strand" evidence="20">
    <location>
        <begin position="104"/>
        <end position="109"/>
    </location>
</feature>
<feature type="strand" evidence="20">
    <location>
        <begin position="111"/>
        <end position="116"/>
    </location>
</feature>
<feature type="helix" evidence="20">
    <location>
        <begin position="119"/>
        <end position="130"/>
    </location>
</feature>
<feature type="strand" evidence="20">
    <location>
        <begin position="134"/>
        <end position="140"/>
    </location>
</feature>
<feature type="strand" evidence="20">
    <location>
        <begin position="143"/>
        <end position="148"/>
    </location>
</feature>
<feature type="turn" evidence="20">
    <location>
        <begin position="149"/>
        <end position="152"/>
    </location>
</feature>
<feature type="strand" evidence="20">
    <location>
        <begin position="153"/>
        <end position="159"/>
    </location>
</feature>
<feature type="strand" evidence="20">
    <location>
        <begin position="164"/>
        <end position="173"/>
    </location>
</feature>
<organism>
    <name type="scientific">Homo sapiens</name>
    <name type="common">Human</name>
    <dbReference type="NCBI Taxonomy" id="9606"/>
    <lineage>
        <taxon>Eukaryota</taxon>
        <taxon>Metazoa</taxon>
        <taxon>Chordata</taxon>
        <taxon>Craniata</taxon>
        <taxon>Vertebrata</taxon>
        <taxon>Euteleostomi</taxon>
        <taxon>Mammalia</taxon>
        <taxon>Eutheria</taxon>
        <taxon>Euarchontoglires</taxon>
        <taxon>Primates</taxon>
        <taxon>Haplorrhini</taxon>
        <taxon>Catarrhini</taxon>
        <taxon>Hominidae</taxon>
        <taxon>Homo</taxon>
    </lineage>
</organism>
<name>RN146_HUMAN</name>